<dbReference type="EMBL" id="CP000378">
    <property type="protein sequence ID" value="ABF75388.1"/>
    <property type="molecule type" value="Genomic_DNA"/>
</dbReference>
<dbReference type="SMR" id="Q1BYB7"/>
<dbReference type="HOGENOM" id="CLU_087843_4_1_4"/>
<dbReference type="GO" id="GO:0005829">
    <property type="term" value="C:cytosol"/>
    <property type="evidence" value="ECO:0007669"/>
    <property type="project" value="TreeGrafter"/>
</dbReference>
<dbReference type="GO" id="GO:0003723">
    <property type="term" value="F:RNA binding"/>
    <property type="evidence" value="ECO:0007669"/>
    <property type="project" value="UniProtKB-UniRule"/>
</dbReference>
<dbReference type="GO" id="GO:0006353">
    <property type="term" value="P:DNA-templated transcription termination"/>
    <property type="evidence" value="ECO:0007669"/>
    <property type="project" value="UniProtKB-UniRule"/>
</dbReference>
<dbReference type="GO" id="GO:0031564">
    <property type="term" value="P:transcription antitermination"/>
    <property type="evidence" value="ECO:0007669"/>
    <property type="project" value="UniProtKB-KW"/>
</dbReference>
<dbReference type="Gene3D" id="1.10.940.10">
    <property type="entry name" value="NusB-like"/>
    <property type="match status" value="1"/>
</dbReference>
<dbReference type="HAMAP" id="MF_00073">
    <property type="entry name" value="NusB"/>
    <property type="match status" value="1"/>
</dbReference>
<dbReference type="InterPro" id="IPR035926">
    <property type="entry name" value="NusB-like_sf"/>
</dbReference>
<dbReference type="InterPro" id="IPR011605">
    <property type="entry name" value="NusB_fam"/>
</dbReference>
<dbReference type="InterPro" id="IPR006027">
    <property type="entry name" value="NusB_RsmB_TIM44"/>
</dbReference>
<dbReference type="NCBIfam" id="TIGR01951">
    <property type="entry name" value="nusB"/>
    <property type="match status" value="1"/>
</dbReference>
<dbReference type="PANTHER" id="PTHR11078:SF3">
    <property type="entry name" value="ANTITERMINATION NUSB DOMAIN-CONTAINING PROTEIN"/>
    <property type="match status" value="1"/>
</dbReference>
<dbReference type="PANTHER" id="PTHR11078">
    <property type="entry name" value="N UTILIZATION SUBSTANCE PROTEIN B-RELATED"/>
    <property type="match status" value="1"/>
</dbReference>
<dbReference type="Pfam" id="PF01029">
    <property type="entry name" value="NusB"/>
    <property type="match status" value="1"/>
</dbReference>
<dbReference type="SUPFAM" id="SSF48013">
    <property type="entry name" value="NusB-like"/>
    <property type="match status" value="1"/>
</dbReference>
<comment type="function">
    <text evidence="1">Involved in transcription antitermination. Required for transcription of ribosomal RNA (rRNA) genes. Binds specifically to the boxA antiterminator sequence of the ribosomal RNA (rrn) operons.</text>
</comment>
<comment type="similarity">
    <text evidence="1">Belongs to the NusB family.</text>
</comment>
<proteinExistence type="inferred from homology"/>
<name>NUSB_BURO1</name>
<feature type="chain" id="PRO_0000265495" description="Transcription antitermination protein NusB">
    <location>
        <begin position="1"/>
        <end position="145"/>
    </location>
</feature>
<keyword id="KW-0694">RNA-binding</keyword>
<keyword id="KW-0804">Transcription</keyword>
<keyword id="KW-0889">Transcription antitermination</keyword>
<keyword id="KW-0805">Transcription regulation</keyword>
<organism>
    <name type="scientific">Burkholderia orbicola (strain AU 1054)</name>
    <dbReference type="NCBI Taxonomy" id="331271"/>
    <lineage>
        <taxon>Bacteria</taxon>
        <taxon>Pseudomonadati</taxon>
        <taxon>Pseudomonadota</taxon>
        <taxon>Betaproteobacteria</taxon>
        <taxon>Burkholderiales</taxon>
        <taxon>Burkholderiaceae</taxon>
        <taxon>Burkholderia</taxon>
        <taxon>Burkholderia cepacia complex</taxon>
        <taxon>Burkholderia orbicola</taxon>
    </lineage>
</organism>
<gene>
    <name evidence="1" type="primary">nusB</name>
    <name type="ordered locus">Bcen_0476</name>
</gene>
<reference key="1">
    <citation type="submission" date="2006-05" db="EMBL/GenBank/DDBJ databases">
        <title>Complete sequence of chromosome 1 of Burkholderia cenocepacia AU 1054.</title>
        <authorList>
            <consortium name="US DOE Joint Genome Institute"/>
            <person name="Copeland A."/>
            <person name="Lucas S."/>
            <person name="Lapidus A."/>
            <person name="Barry K."/>
            <person name="Detter J.C."/>
            <person name="Glavina del Rio T."/>
            <person name="Hammon N."/>
            <person name="Israni S."/>
            <person name="Dalin E."/>
            <person name="Tice H."/>
            <person name="Pitluck S."/>
            <person name="Chain P."/>
            <person name="Malfatti S."/>
            <person name="Shin M."/>
            <person name="Vergez L."/>
            <person name="Schmutz J."/>
            <person name="Larimer F."/>
            <person name="Land M."/>
            <person name="Hauser L."/>
            <person name="Kyrpides N."/>
            <person name="Lykidis A."/>
            <person name="LiPuma J.J."/>
            <person name="Konstantinidis K."/>
            <person name="Tiedje J.M."/>
            <person name="Richardson P."/>
        </authorList>
    </citation>
    <scope>NUCLEOTIDE SEQUENCE [LARGE SCALE GENOMIC DNA]</scope>
    <source>
        <strain>AU 1054</strain>
    </source>
</reference>
<evidence type="ECO:0000255" key="1">
    <source>
        <dbReference type="HAMAP-Rule" id="MF_00073"/>
    </source>
</evidence>
<accession>Q1BYB7</accession>
<protein>
    <recommendedName>
        <fullName evidence="1">Transcription antitermination protein NusB</fullName>
    </recommendedName>
    <alternativeName>
        <fullName evidence="1">Antitermination factor NusB</fullName>
    </alternativeName>
</protein>
<sequence length="145" mass="16015">MKKSARRQSRELATQGLYQWLLSNAPSGEIDAQLRGALGYDKADKELLEAILHGVIREHATLVEALAPSLDRPIDQLSPVERAVLLIATFELTHHVETPYRVIINEAVELAKTFGGSDGYKYVNGVLDKLAAKLRPAETQARRNG</sequence>